<keyword id="KW-1185">Reference proteome</keyword>
<organism>
    <name type="scientific">Synechocystis sp. (strain ATCC 27184 / PCC 6803 / Kazusa)</name>
    <dbReference type="NCBI Taxonomy" id="1111708"/>
    <lineage>
        <taxon>Bacteria</taxon>
        <taxon>Bacillati</taxon>
        <taxon>Cyanobacteriota</taxon>
        <taxon>Cyanophyceae</taxon>
        <taxon>Synechococcales</taxon>
        <taxon>Merismopediaceae</taxon>
        <taxon>Synechocystis</taxon>
    </lineage>
</organism>
<name>Y1526_SYNY3</name>
<reference key="1">
    <citation type="journal article" date="1996" name="DNA Res.">
        <title>Sequence analysis of the genome of the unicellular cyanobacterium Synechocystis sp. strain PCC6803. II. Sequence determination of the entire genome and assignment of potential protein-coding regions.</title>
        <authorList>
            <person name="Kaneko T."/>
            <person name="Sato S."/>
            <person name="Kotani H."/>
            <person name="Tanaka A."/>
            <person name="Asamizu E."/>
            <person name="Nakamura Y."/>
            <person name="Miyajima N."/>
            <person name="Hirosawa M."/>
            <person name="Sugiura M."/>
            <person name="Sasamoto S."/>
            <person name="Kimura T."/>
            <person name="Hosouchi T."/>
            <person name="Matsuno A."/>
            <person name="Muraki A."/>
            <person name="Nakazaki N."/>
            <person name="Naruo K."/>
            <person name="Okumura S."/>
            <person name="Shimpo S."/>
            <person name="Takeuchi C."/>
            <person name="Wada T."/>
            <person name="Watanabe A."/>
            <person name="Yamada M."/>
            <person name="Yasuda M."/>
            <person name="Tabata S."/>
        </authorList>
    </citation>
    <scope>NUCLEOTIDE SEQUENCE [LARGE SCALE GENOMIC DNA]</scope>
    <source>
        <strain>ATCC 27184 / PCC 6803 / Kazusa</strain>
    </source>
</reference>
<protein>
    <recommendedName>
        <fullName>Uncharacterized protein sll1526</fullName>
    </recommendedName>
</protein>
<proteinExistence type="predicted"/>
<dbReference type="EMBL" id="BA000022">
    <property type="protein sequence ID" value="BAA18455.1"/>
    <property type="molecule type" value="Genomic_DNA"/>
</dbReference>
<dbReference type="PIR" id="S76196">
    <property type="entry name" value="S76196"/>
</dbReference>
<dbReference type="SMR" id="P74360"/>
<dbReference type="IntAct" id="P74360">
    <property type="interactions" value="5"/>
</dbReference>
<dbReference type="STRING" id="1148.gene:10499332"/>
<dbReference type="PaxDb" id="1148-1653542"/>
<dbReference type="EnsemblBacteria" id="BAA18455">
    <property type="protein sequence ID" value="BAA18455"/>
    <property type="gene ID" value="BAA18455"/>
</dbReference>
<dbReference type="KEGG" id="syn:sll1526"/>
<dbReference type="eggNOG" id="COG0500">
    <property type="taxonomic scope" value="Bacteria"/>
</dbReference>
<dbReference type="InParanoid" id="P74360"/>
<dbReference type="PhylomeDB" id="P74360"/>
<dbReference type="Proteomes" id="UP000001425">
    <property type="component" value="Chromosome"/>
</dbReference>
<dbReference type="CDD" id="cd02440">
    <property type="entry name" value="AdoMet_MTases"/>
    <property type="match status" value="1"/>
</dbReference>
<dbReference type="Gene3D" id="3.40.50.150">
    <property type="entry name" value="Vaccinia Virus protein VP39"/>
    <property type="match status" value="1"/>
</dbReference>
<dbReference type="InterPro" id="IPR025714">
    <property type="entry name" value="Methyltranfer_dom"/>
</dbReference>
<dbReference type="InterPro" id="IPR018773">
    <property type="entry name" value="MeTrfase_reg_dom_prd"/>
</dbReference>
<dbReference type="InterPro" id="IPR029063">
    <property type="entry name" value="SAM-dependent_MTases_sf"/>
</dbReference>
<dbReference type="Pfam" id="PF13847">
    <property type="entry name" value="Methyltransf_31"/>
    <property type="match status" value="1"/>
</dbReference>
<dbReference type="Pfam" id="PF10119">
    <property type="entry name" value="MethyTransf_Reg"/>
    <property type="match status" value="1"/>
</dbReference>
<dbReference type="SUPFAM" id="SSF53335">
    <property type="entry name" value="S-adenosyl-L-methionine-dependent methyltransferases"/>
    <property type="match status" value="1"/>
</dbReference>
<evidence type="ECO:0000305" key="1"/>
<gene>
    <name type="ordered locus">sll1526</name>
</gene>
<comment type="similarity">
    <text evidence="1">To R.prowazekii RP789, RP027 and RP028.</text>
</comment>
<feature type="chain" id="PRO_0000157890" description="Uncharacterized protein sll1526">
    <location>
        <begin position="1"/>
        <end position="506"/>
    </location>
</feature>
<sequence length="506" mass="57727">MTWNEGYVLEVNYTYGFYGELSPLKLALANTLKSLKSPNLEKNFNYCELACGRGYSTNLLASCYPQAQFYANDFNPSHIVEARTLAETAGTKNVHFFDDSFEEFINQDLPQFDFIVLHGIYSWITPRNRQAIVNFIRQKIKVGGMVYISYNTLPGWAAARPMQALMLRYGRNSSEPILSRIEKALDFTEQMLESKANYFTQNPILKPRLEKLKEQNRYYLAHEYFNEEWNAFYFDEVAKELEEAKLNFMGSAHLIDYVDAVNLSSAAQTQLSQVTDPTFREVVRDFFLNTQFRRDIFVRGKLALLPQEHLQALGNLRFALVVPIKSIKLKQQFPLGEVELQEKVYRPICEALENGPLTLGELQKDSKTKGITLNSLYQALIIMTGIGYTHPAVNETVRKQRQKSTDAFNSAVKTKSLYSDEMAFLASPLVGTGIAVNRLEQLLLLAKERKQDGPQFVWQVLSSQGKKIIKEGKTLETEAENLEHLKNVAENFNGDRLPLLTKLGIS</sequence>
<accession>P74360</accession>